<name>MOAC_BRUSU</name>
<keyword id="KW-0456">Lyase</keyword>
<keyword id="KW-0501">Molybdenum cofactor biosynthesis</keyword>
<organism>
    <name type="scientific">Brucella suis biovar 1 (strain 1330)</name>
    <dbReference type="NCBI Taxonomy" id="204722"/>
    <lineage>
        <taxon>Bacteria</taxon>
        <taxon>Pseudomonadati</taxon>
        <taxon>Pseudomonadota</taxon>
        <taxon>Alphaproteobacteria</taxon>
        <taxon>Hyphomicrobiales</taxon>
        <taxon>Brucellaceae</taxon>
        <taxon>Brucella/Ochrobactrum group</taxon>
        <taxon>Brucella</taxon>
    </lineage>
</organism>
<sequence length="165" mass="17579">MSGKLTHIDQTGAANMVDVGSKDETERQAVAEGAVRMKPETLALILEGNAAKGDVIGTARLAGIMAAKRTSDLIPLCHPLMLTKVAVEIEPDENLPGLRVRALARLKGRTGVEMEALTAASVTCLTIYDMAKAVDRHMEIGSIRVIEKSGRKSGDWAVSDPASMR</sequence>
<feature type="chain" id="PRO_0000097790" description="Cyclic pyranopterin monophosphate synthase">
    <location>
        <begin position="1"/>
        <end position="165"/>
    </location>
</feature>
<feature type="active site" evidence="1">
    <location>
        <position position="129"/>
    </location>
</feature>
<feature type="binding site" evidence="1">
    <location>
        <begin position="76"/>
        <end position="78"/>
    </location>
    <ligand>
        <name>substrate</name>
    </ligand>
</feature>
<feature type="binding site" evidence="1">
    <location>
        <begin position="114"/>
        <end position="115"/>
    </location>
    <ligand>
        <name>substrate</name>
    </ligand>
</feature>
<proteinExistence type="inferred from homology"/>
<dbReference type="EC" id="4.6.1.17" evidence="1"/>
<dbReference type="EMBL" id="AE014291">
    <property type="protein sequence ID" value="AAN30062.1"/>
    <property type="molecule type" value="Genomic_DNA"/>
</dbReference>
<dbReference type="EMBL" id="CP002997">
    <property type="protein sequence ID" value="AEM18480.1"/>
    <property type="molecule type" value="Genomic_DNA"/>
</dbReference>
<dbReference type="RefSeq" id="WP_004690889.1">
    <property type="nucleotide sequence ID" value="NZ_KN046804.1"/>
</dbReference>
<dbReference type="SMR" id="Q8G0F3"/>
<dbReference type="GeneID" id="55590825"/>
<dbReference type="KEGG" id="bms:BR1142"/>
<dbReference type="KEGG" id="bsi:BS1330_I1138"/>
<dbReference type="PATRIC" id="fig|204722.21.peg.1978"/>
<dbReference type="HOGENOM" id="CLU_074693_1_1_5"/>
<dbReference type="PhylomeDB" id="Q8G0F3"/>
<dbReference type="UniPathway" id="UPA00344"/>
<dbReference type="Proteomes" id="UP000007104">
    <property type="component" value="Chromosome I"/>
</dbReference>
<dbReference type="GO" id="GO:0061799">
    <property type="term" value="F:cyclic pyranopterin monophosphate synthase activity"/>
    <property type="evidence" value="ECO:0007669"/>
    <property type="project" value="UniProtKB-UniRule"/>
</dbReference>
<dbReference type="GO" id="GO:0006777">
    <property type="term" value="P:Mo-molybdopterin cofactor biosynthetic process"/>
    <property type="evidence" value="ECO:0007669"/>
    <property type="project" value="UniProtKB-UniRule"/>
</dbReference>
<dbReference type="CDD" id="cd01420">
    <property type="entry name" value="MoaC_PE"/>
    <property type="match status" value="1"/>
</dbReference>
<dbReference type="Gene3D" id="3.30.70.640">
    <property type="entry name" value="Molybdopterin cofactor biosynthesis C (MoaC) domain"/>
    <property type="match status" value="1"/>
</dbReference>
<dbReference type="HAMAP" id="MF_01224_B">
    <property type="entry name" value="MoaC_B"/>
    <property type="match status" value="1"/>
</dbReference>
<dbReference type="InterPro" id="IPR023045">
    <property type="entry name" value="MoaC"/>
</dbReference>
<dbReference type="InterPro" id="IPR047594">
    <property type="entry name" value="MoaC_bact/euk"/>
</dbReference>
<dbReference type="InterPro" id="IPR036522">
    <property type="entry name" value="MoaC_sf"/>
</dbReference>
<dbReference type="InterPro" id="IPR050105">
    <property type="entry name" value="MoCo_biosynth_MoaA/MoaC"/>
</dbReference>
<dbReference type="InterPro" id="IPR002820">
    <property type="entry name" value="Mopterin_CF_biosynth-C_dom"/>
</dbReference>
<dbReference type="NCBIfam" id="TIGR00581">
    <property type="entry name" value="moaC"/>
    <property type="match status" value="1"/>
</dbReference>
<dbReference type="NCBIfam" id="NF006870">
    <property type="entry name" value="PRK09364.1"/>
    <property type="match status" value="1"/>
</dbReference>
<dbReference type="PANTHER" id="PTHR22960">
    <property type="entry name" value="MOLYBDOPTERIN COFACTOR SYNTHESIS PROTEIN A"/>
    <property type="match status" value="1"/>
</dbReference>
<dbReference type="Pfam" id="PF01967">
    <property type="entry name" value="MoaC"/>
    <property type="match status" value="1"/>
</dbReference>
<dbReference type="SUPFAM" id="SSF55040">
    <property type="entry name" value="Molybdenum cofactor biosynthesis protein C, MoaC"/>
    <property type="match status" value="1"/>
</dbReference>
<comment type="function">
    <text evidence="1">Catalyzes the conversion of (8S)-3',8-cyclo-7,8-dihydroguanosine 5'-triphosphate to cyclic pyranopterin monophosphate (cPMP).</text>
</comment>
<comment type="catalytic activity">
    <reaction evidence="1">
        <text>(8S)-3',8-cyclo-7,8-dihydroguanosine 5'-triphosphate = cyclic pyranopterin phosphate + diphosphate</text>
        <dbReference type="Rhea" id="RHEA:49580"/>
        <dbReference type="ChEBI" id="CHEBI:33019"/>
        <dbReference type="ChEBI" id="CHEBI:59648"/>
        <dbReference type="ChEBI" id="CHEBI:131766"/>
        <dbReference type="EC" id="4.6.1.17"/>
    </reaction>
</comment>
<comment type="pathway">
    <text evidence="1">Cofactor biosynthesis; molybdopterin biosynthesis.</text>
</comment>
<comment type="subunit">
    <text evidence="1">Homohexamer; trimer of dimers.</text>
</comment>
<comment type="similarity">
    <text evidence="1">Belongs to the MoaC family.</text>
</comment>
<evidence type="ECO:0000255" key="1">
    <source>
        <dbReference type="HAMAP-Rule" id="MF_01224"/>
    </source>
</evidence>
<reference key="1">
    <citation type="journal article" date="2002" name="Proc. Natl. Acad. Sci. U.S.A.">
        <title>The Brucella suis genome reveals fundamental similarities between animal and plant pathogens and symbionts.</title>
        <authorList>
            <person name="Paulsen I.T."/>
            <person name="Seshadri R."/>
            <person name="Nelson K.E."/>
            <person name="Eisen J.A."/>
            <person name="Heidelberg J.F."/>
            <person name="Read T.D."/>
            <person name="Dodson R.J."/>
            <person name="Umayam L.A."/>
            <person name="Brinkac L.M."/>
            <person name="Beanan M.J."/>
            <person name="Daugherty S.C."/>
            <person name="DeBoy R.T."/>
            <person name="Durkin A.S."/>
            <person name="Kolonay J.F."/>
            <person name="Madupu R."/>
            <person name="Nelson W.C."/>
            <person name="Ayodeji B."/>
            <person name="Kraul M."/>
            <person name="Shetty J."/>
            <person name="Malek J.A."/>
            <person name="Van Aken S.E."/>
            <person name="Riedmuller S."/>
            <person name="Tettelin H."/>
            <person name="Gill S.R."/>
            <person name="White O."/>
            <person name="Salzberg S.L."/>
            <person name="Hoover D.L."/>
            <person name="Lindler L.E."/>
            <person name="Halling S.M."/>
            <person name="Boyle S.M."/>
            <person name="Fraser C.M."/>
        </authorList>
    </citation>
    <scope>NUCLEOTIDE SEQUENCE [LARGE SCALE GENOMIC DNA]</scope>
    <source>
        <strain>1330</strain>
    </source>
</reference>
<reference key="2">
    <citation type="journal article" date="2011" name="J. Bacteriol.">
        <title>Revised genome sequence of Brucella suis 1330.</title>
        <authorList>
            <person name="Tae H."/>
            <person name="Shallom S."/>
            <person name="Settlage R."/>
            <person name="Preston D."/>
            <person name="Adams L.G."/>
            <person name="Garner H.R."/>
        </authorList>
    </citation>
    <scope>NUCLEOTIDE SEQUENCE [LARGE SCALE GENOMIC DNA]</scope>
    <source>
        <strain>1330</strain>
    </source>
</reference>
<accession>Q8G0F3</accession>
<accession>G0KA64</accession>
<gene>
    <name evidence="1" type="primary">moaC</name>
    <name type="ordered locus">BR1142</name>
    <name type="ordered locus">BS1330_I1138</name>
</gene>
<protein>
    <recommendedName>
        <fullName evidence="1">Cyclic pyranopterin monophosphate synthase</fullName>
        <ecNumber evidence="1">4.6.1.17</ecNumber>
    </recommendedName>
    <alternativeName>
        <fullName evidence="1">Molybdenum cofactor biosynthesis protein C</fullName>
    </alternativeName>
</protein>